<evidence type="ECO:0000250" key="1">
    <source>
        <dbReference type="UniProtKB" id="P02820"/>
    </source>
</evidence>
<evidence type="ECO:0000255" key="2"/>
<evidence type="ECO:0000255" key="3">
    <source>
        <dbReference type="PROSITE-ProRule" id="PRU00463"/>
    </source>
</evidence>
<evidence type="ECO:0000269" key="4">
    <source>
    </source>
</evidence>
<evidence type="ECO:0000303" key="5">
    <source>
    </source>
</evidence>
<evidence type="ECO:0000305" key="6"/>
<evidence type="ECO:0000312" key="7">
    <source>
        <dbReference type="EMBL" id="AAH31815.1"/>
    </source>
</evidence>
<evidence type="ECO:0000312" key="8">
    <source>
        <dbReference type="MGI" id="MGI:88155"/>
    </source>
</evidence>
<protein>
    <recommendedName>
        <fullName evidence="5">Osteocalcin-related protein</fullName>
    </recommendedName>
    <alternativeName>
        <fullName evidence="6">Gamma-carboxyglutamic acid-containing protein 3</fullName>
    </alternativeName>
    <alternativeName>
        <fullName evidence="5">Nephrocalcin</fullName>
    </alternativeName>
    <alternativeName>
        <fullName evidence="8">OC-X</fullName>
    </alternativeName>
</protein>
<organism>
    <name type="scientific">Mus musculus</name>
    <name type="common">Mouse</name>
    <dbReference type="NCBI Taxonomy" id="10090"/>
    <lineage>
        <taxon>Eukaryota</taxon>
        <taxon>Metazoa</taxon>
        <taxon>Chordata</taxon>
        <taxon>Craniata</taxon>
        <taxon>Vertebrata</taxon>
        <taxon>Euteleostomi</taxon>
        <taxon>Mammalia</taxon>
        <taxon>Eutheria</taxon>
        <taxon>Euarchontoglires</taxon>
        <taxon>Glires</taxon>
        <taxon>Rodentia</taxon>
        <taxon>Myomorpha</taxon>
        <taxon>Muroidea</taxon>
        <taxon>Muridae</taxon>
        <taxon>Murinae</taxon>
        <taxon>Mus</taxon>
        <taxon>Mus</taxon>
    </lineage>
</organism>
<feature type="signal peptide" evidence="2">
    <location>
        <begin position="1"/>
        <end position="23"/>
    </location>
</feature>
<feature type="propeptide" id="PRO_0000011090" evidence="6">
    <location>
        <begin position="24"/>
        <end position="49"/>
    </location>
</feature>
<feature type="chain" id="PRO_0000011091" description="Osteocalcin-related protein">
    <location>
        <begin position="50"/>
        <end position="95"/>
    </location>
</feature>
<feature type="domain" description="Gla" evidence="3">
    <location>
        <begin position="46"/>
        <end position="92"/>
    </location>
</feature>
<feature type="binding site" evidence="1">
    <location>
        <position position="62"/>
    </location>
    <ligand>
        <name>Ca(2+)</name>
        <dbReference type="ChEBI" id="CHEBI:29108"/>
        <label>3</label>
    </ligand>
</feature>
<feature type="binding site" evidence="1">
    <location>
        <position position="66"/>
    </location>
    <ligand>
        <name>Ca(2+)</name>
        <dbReference type="ChEBI" id="CHEBI:29108"/>
        <label>2</label>
    </ligand>
</feature>
<feature type="binding site" evidence="1">
    <location>
        <position position="69"/>
    </location>
    <ligand>
        <name>Ca(2+)</name>
        <dbReference type="ChEBI" id="CHEBI:29108"/>
        <label>1</label>
    </ligand>
</feature>
<feature type="binding site" evidence="1">
    <location>
        <position position="69"/>
    </location>
    <ligand>
        <name>Ca(2+)</name>
        <dbReference type="ChEBI" id="CHEBI:29108"/>
        <label>2</label>
    </ligand>
</feature>
<feature type="binding site" evidence="1">
    <location>
        <position position="75"/>
    </location>
    <ligand>
        <name>Ca(2+)</name>
        <dbReference type="ChEBI" id="CHEBI:29108"/>
        <label>1</label>
    </ligand>
</feature>
<feature type="modified residue" description="4-carboxyglutamate" evidence="3">
    <location>
        <position position="66"/>
    </location>
</feature>
<feature type="modified residue" description="4-carboxyglutamate" evidence="3">
    <location>
        <position position="69"/>
    </location>
</feature>
<feature type="disulfide bond" evidence="3">
    <location>
        <begin position="68"/>
        <end position="74"/>
    </location>
</feature>
<feature type="sequence conflict" description="In Ref. 4; AAH31815/AAH55868/AAI00688/AAI01949/AAI41239/AAI45566." evidence="6" ref="4">
    <original>T</original>
    <variation>S</variation>
    <location>
        <position position="26"/>
    </location>
</feature>
<gene>
    <name evidence="8" type="primary">Bglap3</name>
    <name evidence="8" type="synonym">Bglap-rs1</name>
</gene>
<comment type="function">
    <text evidence="1">Binds strongly to apatite and calcium.</text>
</comment>
<comment type="subcellular location">
    <subcellularLocation>
        <location evidence="6">Secreted</location>
    </subcellularLocation>
</comment>
<comment type="tissue specificity">
    <text evidence="4">Expressed in kidney and lung, but not in bone.</text>
</comment>
<comment type="PTM">
    <text evidence="1">Gamma-carboxyglutamic acid residues are formed by vitamin K dependent carboxylation. These residues are essential for the binding of calcium.</text>
</comment>
<comment type="similarity">
    <text evidence="6">Belongs to the osteocalcin/matrix Gla protein family.</text>
</comment>
<accession>P54615</accession>
<accession>Q78H72</accession>
<reference key="1">
    <citation type="journal article" date="1994" name="J. Biol. Chem.">
        <title>The mouse osteocalcin gene cluster contains three genes with two separate spatial and temporal patterns of expression.</title>
        <authorList>
            <person name="Desbois C."/>
            <person name="Hogue D.A."/>
            <person name="Karsenty G."/>
        </authorList>
    </citation>
    <scope>NUCLEOTIDE SEQUENCE [GENOMIC DNA]</scope>
    <scope>TISSUE SPECIFICITY</scope>
</reference>
<reference key="2">
    <citation type="journal article" date="1993" name="Endocrinology">
        <title>Multiple copies of the bone-specific osteocalcin gene in mouse and rat.</title>
        <authorList>
            <person name="Rahman S."/>
            <person name="Oberdorf A."/>
            <person name="Montecino M."/>
            <person name="Tanhauser S.M."/>
            <person name="Lian J.B."/>
            <person name="Stein G.S."/>
            <person name="Laipis P.J."/>
            <person name="Stein J.L."/>
        </authorList>
    </citation>
    <scope>NUCLEOTIDE SEQUENCE [GENOMIC DNA]</scope>
</reference>
<reference key="3">
    <citation type="submission" date="1994-07" db="EMBL/GenBank/DDBJ databases">
        <authorList>
            <person name="Yotov W.V."/>
            <person name="St Arnaud R."/>
        </authorList>
    </citation>
    <scope>NUCLEOTIDE SEQUENCE</scope>
    <source>
        <strain>129/SvJ</strain>
        <tissue>Liver</tissue>
    </source>
</reference>
<reference key="4">
    <citation type="journal article" date="2004" name="Genome Res.">
        <title>The status, quality, and expansion of the NIH full-length cDNA project: the Mammalian Gene Collection (MGC).</title>
        <authorList>
            <consortium name="The MGC Project Team"/>
        </authorList>
    </citation>
    <scope>NUCLEOTIDE SEQUENCE [LARGE SCALE MRNA]</scope>
    <source>
        <tissue evidence="7">Salivary gland</tissue>
    </source>
</reference>
<proteinExistence type="evidence at transcript level"/>
<sequence>MRTLSLLTLLALAALCLSDLTDATPTGPESDKAFMSKQEGNKVVNRLRRYLGASVPSPDPLEPTRELCELDPACDELSNQYGLKTAYRRIYGITI</sequence>
<name>OSTR_MOUSE</name>
<keyword id="KW-0091">Biomineralization</keyword>
<keyword id="KW-0106">Calcium</keyword>
<keyword id="KW-0165">Cleavage on pair of basic residues</keyword>
<keyword id="KW-1015">Disulfide bond</keyword>
<keyword id="KW-0301">Gamma-carboxyglutamic acid</keyword>
<keyword id="KW-0479">Metal-binding</keyword>
<keyword id="KW-1185">Reference proteome</keyword>
<keyword id="KW-0964">Secreted</keyword>
<keyword id="KW-0732">Signal</keyword>
<dbReference type="EMBL" id="L24430">
    <property type="protein sequence ID" value="AAA39855.1"/>
    <property type="molecule type" value="Genomic_DNA"/>
</dbReference>
<dbReference type="EMBL" id="S67456">
    <property type="protein sequence ID" value="AAB29146.1"/>
    <property type="molecule type" value="Genomic_DNA"/>
</dbReference>
<dbReference type="EMBL" id="U11541">
    <property type="protein sequence ID" value="AAB60445.1"/>
    <property type="molecule type" value="Unassigned_DNA"/>
</dbReference>
<dbReference type="EMBL" id="BC031815">
    <property type="protein sequence ID" value="AAH31815.1"/>
    <property type="molecule type" value="mRNA"/>
</dbReference>
<dbReference type="EMBL" id="BC055868">
    <property type="protein sequence ID" value="AAH55868.1"/>
    <property type="molecule type" value="mRNA"/>
</dbReference>
<dbReference type="EMBL" id="BC100687">
    <property type="protein sequence ID" value="AAI00688.1"/>
    <property type="molecule type" value="mRNA"/>
</dbReference>
<dbReference type="EMBL" id="BC101948">
    <property type="protein sequence ID" value="AAI01949.1"/>
    <property type="molecule type" value="mRNA"/>
</dbReference>
<dbReference type="EMBL" id="BC141238">
    <property type="protein sequence ID" value="AAI41239.1"/>
    <property type="molecule type" value="mRNA"/>
</dbReference>
<dbReference type="EMBL" id="BC145565">
    <property type="protein sequence ID" value="AAI45566.1"/>
    <property type="molecule type" value="mRNA"/>
</dbReference>
<dbReference type="CCDS" id="CCDS17472.1"/>
<dbReference type="PIR" id="I61188">
    <property type="entry name" value="I61188"/>
</dbReference>
<dbReference type="RefSeq" id="NP_001292377.1">
    <property type="nucleotide sequence ID" value="NM_001305448.1"/>
</dbReference>
<dbReference type="RefSeq" id="NP_001292378.1">
    <property type="nucleotide sequence ID" value="NM_001305449.1"/>
</dbReference>
<dbReference type="RefSeq" id="NP_001292379.1">
    <property type="nucleotide sequence ID" value="NM_001305450.1"/>
</dbReference>
<dbReference type="RefSeq" id="NP_112736.3">
    <property type="nucleotide sequence ID" value="NM_031368.5"/>
</dbReference>
<dbReference type="SMR" id="P54615"/>
<dbReference type="FunCoup" id="P54615">
    <property type="interactions" value="47"/>
</dbReference>
<dbReference type="STRING" id="10090.ENSMUSP00000103166"/>
<dbReference type="PaxDb" id="10090-ENSMUSP00000074965"/>
<dbReference type="DNASU" id="12095"/>
<dbReference type="Ensembl" id="ENSMUST00000075523.11">
    <property type="protein sequence ID" value="ENSMUSP00000074965.5"/>
    <property type="gene ID" value="ENSMUSG00000074489.10"/>
</dbReference>
<dbReference type="Ensembl" id="ENSMUST00000107542.2">
    <property type="protein sequence ID" value="ENSMUSP00000103166.2"/>
    <property type="gene ID" value="ENSMUSG00000074489.10"/>
</dbReference>
<dbReference type="Ensembl" id="ENSMUST00000107543.8">
    <property type="protein sequence ID" value="ENSMUSP00000103167.2"/>
    <property type="gene ID" value="ENSMUSG00000074489.10"/>
</dbReference>
<dbReference type="GeneID" id="12095"/>
<dbReference type="KEGG" id="mmu:12095"/>
<dbReference type="UCSC" id="uc008puv.3">
    <property type="organism name" value="mouse"/>
</dbReference>
<dbReference type="UCSC" id="uc012cru.2">
    <property type="organism name" value="mouse"/>
</dbReference>
<dbReference type="AGR" id="MGI:88155"/>
<dbReference type="CTD" id="12095"/>
<dbReference type="MGI" id="MGI:88155">
    <property type="gene designation" value="Bglap3"/>
</dbReference>
<dbReference type="VEuPathDB" id="HostDB:ENSMUSG00000074489"/>
<dbReference type="eggNOG" id="ENOG502S85I">
    <property type="taxonomic scope" value="Eukaryota"/>
</dbReference>
<dbReference type="GeneTree" id="ENSGT00410000026290"/>
<dbReference type="HOGENOM" id="CLU_160110_0_0_1"/>
<dbReference type="InParanoid" id="P54615"/>
<dbReference type="OMA" id="REACELN"/>
<dbReference type="OrthoDB" id="9950568at2759"/>
<dbReference type="PhylomeDB" id="P54615"/>
<dbReference type="TreeFam" id="TF330920"/>
<dbReference type="BioGRID-ORCS" id="12095">
    <property type="hits" value="0 hits in 56 CRISPR screens"/>
</dbReference>
<dbReference type="ChiTaRS" id="Bglap3">
    <property type="organism name" value="mouse"/>
</dbReference>
<dbReference type="PRO" id="PR:P54615"/>
<dbReference type="Proteomes" id="UP000000589">
    <property type="component" value="Chromosome 3"/>
</dbReference>
<dbReference type="RNAct" id="P54615">
    <property type="molecule type" value="protein"/>
</dbReference>
<dbReference type="Bgee" id="ENSMUSG00000074489">
    <property type="expression patterns" value="Expressed in esophagus and 75 other cell types or tissues"/>
</dbReference>
<dbReference type="GO" id="GO:0005576">
    <property type="term" value="C:extracellular region"/>
    <property type="evidence" value="ECO:0007669"/>
    <property type="project" value="UniProtKB-SubCell"/>
</dbReference>
<dbReference type="GO" id="GO:0005509">
    <property type="term" value="F:calcium ion binding"/>
    <property type="evidence" value="ECO:0007669"/>
    <property type="project" value="InterPro"/>
</dbReference>
<dbReference type="GO" id="GO:0031214">
    <property type="term" value="P:biomineral tissue development"/>
    <property type="evidence" value="ECO:0007669"/>
    <property type="project" value="UniProtKB-KW"/>
</dbReference>
<dbReference type="GO" id="GO:0060348">
    <property type="term" value="P:bone development"/>
    <property type="evidence" value="ECO:0007669"/>
    <property type="project" value="InterPro"/>
</dbReference>
<dbReference type="GO" id="GO:0030500">
    <property type="term" value="P:regulation of bone mineralization"/>
    <property type="evidence" value="ECO:0007669"/>
    <property type="project" value="InterPro"/>
</dbReference>
<dbReference type="GO" id="GO:1900076">
    <property type="term" value="P:regulation of cellular response to insulin stimulus"/>
    <property type="evidence" value="ECO:0007669"/>
    <property type="project" value="InterPro"/>
</dbReference>
<dbReference type="GO" id="GO:0032571">
    <property type="term" value="P:response to vitamin K"/>
    <property type="evidence" value="ECO:0007669"/>
    <property type="project" value="InterPro"/>
</dbReference>
<dbReference type="InterPro" id="IPR035972">
    <property type="entry name" value="GLA-like_dom_SF"/>
</dbReference>
<dbReference type="InterPro" id="IPR000294">
    <property type="entry name" value="GLA_domain"/>
</dbReference>
<dbReference type="InterPro" id="IPR039176">
    <property type="entry name" value="Osteocalcin"/>
</dbReference>
<dbReference type="InterPro" id="IPR002384">
    <property type="entry name" value="Osteocalcin/MGP"/>
</dbReference>
<dbReference type="PANTHER" id="PTHR14235">
    <property type="entry name" value="OSTEOCALCIN"/>
    <property type="match status" value="1"/>
</dbReference>
<dbReference type="PANTHER" id="PTHR14235:SF0">
    <property type="entry name" value="OSTEOCALCIN"/>
    <property type="match status" value="1"/>
</dbReference>
<dbReference type="PRINTS" id="PR00002">
    <property type="entry name" value="GLABONE"/>
</dbReference>
<dbReference type="SMART" id="SM00069">
    <property type="entry name" value="GLA"/>
    <property type="match status" value="1"/>
</dbReference>
<dbReference type="SUPFAM" id="SSF57630">
    <property type="entry name" value="GLA-domain"/>
    <property type="match status" value="1"/>
</dbReference>
<dbReference type="PROSITE" id="PS00011">
    <property type="entry name" value="GLA_1"/>
    <property type="match status" value="1"/>
</dbReference>
<dbReference type="PROSITE" id="PS50998">
    <property type="entry name" value="GLA_2"/>
    <property type="match status" value="1"/>
</dbReference>